<name>RS5_BRUA1</name>
<reference key="1">
    <citation type="journal article" date="2008" name="PLoS ONE">
        <title>Genome sequence of Brucella abortus vaccine strain S19 compared to virulent strains yields candidate virulence genes.</title>
        <authorList>
            <person name="Crasta O.R."/>
            <person name="Folkerts O."/>
            <person name="Fei Z."/>
            <person name="Mane S.P."/>
            <person name="Evans C."/>
            <person name="Martino-Catt S."/>
            <person name="Bricker B."/>
            <person name="Yu G."/>
            <person name="Du L."/>
            <person name="Sobral B.W."/>
        </authorList>
    </citation>
    <scope>NUCLEOTIDE SEQUENCE [LARGE SCALE GENOMIC DNA]</scope>
    <source>
        <strain>S19</strain>
    </source>
</reference>
<dbReference type="EMBL" id="CP000887">
    <property type="protein sequence ID" value="ACD72659.1"/>
    <property type="molecule type" value="Genomic_DNA"/>
</dbReference>
<dbReference type="RefSeq" id="WP_002964345.1">
    <property type="nucleotide sequence ID" value="NC_010742.1"/>
</dbReference>
<dbReference type="SMR" id="B2S662"/>
<dbReference type="GeneID" id="93016456"/>
<dbReference type="KEGG" id="bmc:BAbS19_I11540"/>
<dbReference type="HOGENOM" id="CLU_065898_2_2_5"/>
<dbReference type="Proteomes" id="UP000002565">
    <property type="component" value="Chromosome 1"/>
</dbReference>
<dbReference type="GO" id="GO:0015935">
    <property type="term" value="C:small ribosomal subunit"/>
    <property type="evidence" value="ECO:0007669"/>
    <property type="project" value="InterPro"/>
</dbReference>
<dbReference type="GO" id="GO:0019843">
    <property type="term" value="F:rRNA binding"/>
    <property type="evidence" value="ECO:0007669"/>
    <property type="project" value="UniProtKB-UniRule"/>
</dbReference>
<dbReference type="GO" id="GO:0003735">
    <property type="term" value="F:structural constituent of ribosome"/>
    <property type="evidence" value="ECO:0007669"/>
    <property type="project" value="InterPro"/>
</dbReference>
<dbReference type="GO" id="GO:0006412">
    <property type="term" value="P:translation"/>
    <property type="evidence" value="ECO:0007669"/>
    <property type="project" value="UniProtKB-UniRule"/>
</dbReference>
<dbReference type="FunFam" id="3.30.160.20:FF:000001">
    <property type="entry name" value="30S ribosomal protein S5"/>
    <property type="match status" value="1"/>
</dbReference>
<dbReference type="FunFam" id="3.30.230.10:FF:000002">
    <property type="entry name" value="30S ribosomal protein S5"/>
    <property type="match status" value="1"/>
</dbReference>
<dbReference type="Gene3D" id="3.30.160.20">
    <property type="match status" value="1"/>
</dbReference>
<dbReference type="Gene3D" id="3.30.230.10">
    <property type="match status" value="1"/>
</dbReference>
<dbReference type="HAMAP" id="MF_01307_B">
    <property type="entry name" value="Ribosomal_uS5_B"/>
    <property type="match status" value="1"/>
</dbReference>
<dbReference type="InterPro" id="IPR020568">
    <property type="entry name" value="Ribosomal_Su5_D2-typ_SF"/>
</dbReference>
<dbReference type="InterPro" id="IPR000851">
    <property type="entry name" value="Ribosomal_uS5"/>
</dbReference>
<dbReference type="InterPro" id="IPR005712">
    <property type="entry name" value="Ribosomal_uS5_bac-type"/>
</dbReference>
<dbReference type="InterPro" id="IPR005324">
    <property type="entry name" value="Ribosomal_uS5_C"/>
</dbReference>
<dbReference type="InterPro" id="IPR013810">
    <property type="entry name" value="Ribosomal_uS5_N"/>
</dbReference>
<dbReference type="InterPro" id="IPR018192">
    <property type="entry name" value="Ribosomal_uS5_N_CS"/>
</dbReference>
<dbReference type="InterPro" id="IPR014721">
    <property type="entry name" value="Ribsml_uS5_D2-typ_fold_subgr"/>
</dbReference>
<dbReference type="NCBIfam" id="TIGR01021">
    <property type="entry name" value="rpsE_bact"/>
    <property type="match status" value="1"/>
</dbReference>
<dbReference type="PANTHER" id="PTHR48277">
    <property type="entry name" value="MITOCHONDRIAL RIBOSOMAL PROTEIN S5"/>
    <property type="match status" value="1"/>
</dbReference>
<dbReference type="PANTHER" id="PTHR48277:SF1">
    <property type="entry name" value="MITOCHONDRIAL RIBOSOMAL PROTEIN S5"/>
    <property type="match status" value="1"/>
</dbReference>
<dbReference type="Pfam" id="PF00333">
    <property type="entry name" value="Ribosomal_S5"/>
    <property type="match status" value="1"/>
</dbReference>
<dbReference type="Pfam" id="PF03719">
    <property type="entry name" value="Ribosomal_S5_C"/>
    <property type="match status" value="1"/>
</dbReference>
<dbReference type="SUPFAM" id="SSF54768">
    <property type="entry name" value="dsRNA-binding domain-like"/>
    <property type="match status" value="1"/>
</dbReference>
<dbReference type="SUPFAM" id="SSF54211">
    <property type="entry name" value="Ribosomal protein S5 domain 2-like"/>
    <property type="match status" value="1"/>
</dbReference>
<dbReference type="PROSITE" id="PS00585">
    <property type="entry name" value="RIBOSOMAL_S5"/>
    <property type="match status" value="1"/>
</dbReference>
<dbReference type="PROSITE" id="PS50881">
    <property type="entry name" value="S5_DSRBD"/>
    <property type="match status" value="1"/>
</dbReference>
<gene>
    <name evidence="1" type="primary">rpsE</name>
    <name type="ordered locus">BAbS19_I11540</name>
</gene>
<organism>
    <name type="scientific">Brucella abortus (strain S19)</name>
    <dbReference type="NCBI Taxonomy" id="430066"/>
    <lineage>
        <taxon>Bacteria</taxon>
        <taxon>Pseudomonadati</taxon>
        <taxon>Pseudomonadota</taxon>
        <taxon>Alphaproteobacteria</taxon>
        <taxon>Hyphomicrobiales</taxon>
        <taxon>Brucellaceae</taxon>
        <taxon>Brucella/Ochrobactrum group</taxon>
        <taxon>Brucella</taxon>
    </lineage>
</organism>
<accession>B2S662</accession>
<keyword id="KW-0687">Ribonucleoprotein</keyword>
<keyword id="KW-0689">Ribosomal protein</keyword>
<keyword id="KW-0694">RNA-binding</keyword>
<keyword id="KW-0699">rRNA-binding</keyword>
<evidence type="ECO:0000255" key="1">
    <source>
        <dbReference type="HAMAP-Rule" id="MF_01307"/>
    </source>
</evidence>
<evidence type="ECO:0000305" key="2"/>
<proteinExistence type="inferred from homology"/>
<comment type="function">
    <text evidence="1">With S4 and S12 plays an important role in translational accuracy.</text>
</comment>
<comment type="function">
    <text evidence="1">Located at the back of the 30S subunit body where it stabilizes the conformation of the head with respect to the body.</text>
</comment>
<comment type="subunit">
    <text evidence="1">Part of the 30S ribosomal subunit. Contacts proteins S4 and S8.</text>
</comment>
<comment type="domain">
    <text>The N-terminal domain interacts with the head of the 30S subunit; the C-terminal domain interacts with the body and contacts protein S4. The interaction surface between S4 and S5 is involved in control of translational fidelity.</text>
</comment>
<comment type="similarity">
    <text evidence="1">Belongs to the universal ribosomal protein uS5 family.</text>
</comment>
<protein>
    <recommendedName>
        <fullName evidence="1">Small ribosomal subunit protein uS5</fullName>
    </recommendedName>
    <alternativeName>
        <fullName evidence="2">30S ribosomal protein S5</fullName>
    </alternativeName>
</protein>
<feature type="chain" id="PRO_1000140839" description="Small ribosomal subunit protein uS5">
    <location>
        <begin position="1"/>
        <end position="186"/>
    </location>
</feature>
<feature type="domain" description="S5 DRBM" evidence="1">
    <location>
        <begin position="20"/>
        <end position="83"/>
    </location>
</feature>
<sequence>MAQRERNREERGREERDSEFVDKLVHINRVAKVVKGGRRFGFAALVVVGDQKGRVGFGHGKAREVPEAIRKATEAAKRDMIFVPLRSGRTLHHDVEGRHGAGKVLLRAAPAGKGIIAGGPMRAVFETLGVQDVVAKSLGSSNPYNMVRATFDALKHQMHPKDIAAQRGIKYSTLQARRHDVVGSEE</sequence>